<sequence>MSSPPASTDHRLVGSTTGAPDTPSAAATPLPQTLWSLQVPLHITHASKSTAPFIVSVPRFSYLALLLPRLTAYYGLPCSSFHHEEIQLRNLAVGLLVDLYQPATLPWRLVVGDGPEWDIADTFTNSAKEADFVRNGNAKQIMSLSKEHSTALWNAVQDNDHVSFGKVNRRLLNTPSPFKNVPIRIYIPSSPNDTGDATPGSFKVVQNLVSPRLPNRAPQTLGAALKSMLPTLFPSSRDPVLANVILHGGPVPFRAPLEELMREAAYPDGWLCLCVVLL</sequence>
<gene>
    <name type="primary">ATG5</name>
    <name type="ORF">CHGG_00506</name>
</gene>
<reference key="1">
    <citation type="journal article" date="2015" name="Genome Announc.">
        <title>Draft genome sequence of the cellulolytic fungus Chaetomium globosum.</title>
        <authorList>
            <person name="Cuomo C.A."/>
            <person name="Untereiner W.A."/>
            <person name="Ma L.-J."/>
            <person name="Grabherr M."/>
            <person name="Birren B.W."/>
        </authorList>
    </citation>
    <scope>NUCLEOTIDE SEQUENCE [LARGE SCALE GENOMIC DNA]</scope>
    <source>
        <strain>ATCC 6205 / CBS 148.51 / DSM 1962 / NBRC 6347 / NRRL 1970</strain>
    </source>
</reference>
<accession>Q2HGZ8</accession>
<comment type="function">
    <text evidence="1">Involved in cytoplasm to vacuole transport (Cvt) and autophagic vesicle formation. Autophagy is essential for maintenance of amino acid levels and protein synthesis under nitrogen starvation. Required for selective autophagic degradation of the nucleus (nucleophagy). Also required for mitophagy, which eliminates defective or superfluous mitochondria in order to fulfill cellular energy requirements and prevent excess ROS production. Conjugation with ATG12, through a ubiquitin-like conjugating system involving ATG7 as an E1-like activating enzyme and ATG10 as an E2-like conjugating enzyme, is essential for its function. The ATG12-ATG5 conjugate acts as an E3-like enzyme which is required for lipidation of ATG8 and ATG8 association to the vesicle membranes (By similarity).</text>
</comment>
<comment type="subunit">
    <text evidence="1">Conjugated with ATG12.</text>
</comment>
<comment type="subcellular location">
    <subcellularLocation>
        <location evidence="1">Preautophagosomal structure membrane</location>
        <topology evidence="1">Peripheral membrane protein</topology>
    </subcellularLocation>
</comment>
<comment type="PTM">
    <text evidence="1">Conjugated to ATG12; which is essential for autophagy.</text>
</comment>
<comment type="similarity">
    <text evidence="3">Belongs to the ATG5 family.</text>
</comment>
<organism>
    <name type="scientific">Chaetomium globosum (strain ATCC 6205 / CBS 148.51 / DSM 1962 / NBRC 6347 / NRRL 1970)</name>
    <name type="common">Soil fungus</name>
    <dbReference type="NCBI Taxonomy" id="306901"/>
    <lineage>
        <taxon>Eukaryota</taxon>
        <taxon>Fungi</taxon>
        <taxon>Dikarya</taxon>
        <taxon>Ascomycota</taxon>
        <taxon>Pezizomycotina</taxon>
        <taxon>Sordariomycetes</taxon>
        <taxon>Sordariomycetidae</taxon>
        <taxon>Sordariales</taxon>
        <taxon>Chaetomiaceae</taxon>
        <taxon>Chaetomium</taxon>
    </lineage>
</organism>
<keyword id="KW-0072">Autophagy</keyword>
<keyword id="KW-1017">Isopeptide bond</keyword>
<keyword id="KW-0472">Membrane</keyword>
<keyword id="KW-0653">Protein transport</keyword>
<keyword id="KW-1185">Reference proteome</keyword>
<keyword id="KW-0813">Transport</keyword>
<keyword id="KW-0832">Ubl conjugation</keyword>
<dbReference type="EMBL" id="CH408029">
    <property type="protein sequence ID" value="EAQ92271.1"/>
    <property type="molecule type" value="Genomic_DNA"/>
</dbReference>
<dbReference type="RefSeq" id="XP_001219727.1">
    <property type="nucleotide sequence ID" value="XM_001219726.1"/>
</dbReference>
<dbReference type="SMR" id="Q2HGZ8"/>
<dbReference type="STRING" id="306901.Q2HGZ8"/>
<dbReference type="GeneID" id="4387819"/>
<dbReference type="VEuPathDB" id="FungiDB:CHGG_00506"/>
<dbReference type="eggNOG" id="KOG2976">
    <property type="taxonomic scope" value="Eukaryota"/>
</dbReference>
<dbReference type="HOGENOM" id="CLU_051894_2_0_1"/>
<dbReference type="InParanoid" id="Q2HGZ8"/>
<dbReference type="OMA" id="SIQKAVW"/>
<dbReference type="OrthoDB" id="272162at2759"/>
<dbReference type="Proteomes" id="UP000001056">
    <property type="component" value="Unassembled WGS sequence"/>
</dbReference>
<dbReference type="GO" id="GO:0034274">
    <property type="term" value="C:Atg12-Atg5-Atg16 complex"/>
    <property type="evidence" value="ECO:0007669"/>
    <property type="project" value="TreeGrafter"/>
</dbReference>
<dbReference type="GO" id="GO:0005776">
    <property type="term" value="C:autophagosome"/>
    <property type="evidence" value="ECO:0007669"/>
    <property type="project" value="TreeGrafter"/>
</dbReference>
<dbReference type="GO" id="GO:0044233">
    <property type="term" value="C:mitochondria-associated endoplasmic reticulum membrane contact site"/>
    <property type="evidence" value="ECO:0007669"/>
    <property type="project" value="TreeGrafter"/>
</dbReference>
<dbReference type="GO" id="GO:0061908">
    <property type="term" value="C:phagophore"/>
    <property type="evidence" value="ECO:0007669"/>
    <property type="project" value="TreeGrafter"/>
</dbReference>
<dbReference type="GO" id="GO:0034045">
    <property type="term" value="C:phagophore assembly site membrane"/>
    <property type="evidence" value="ECO:0007669"/>
    <property type="project" value="UniProtKB-SubCell"/>
</dbReference>
<dbReference type="GO" id="GO:0019776">
    <property type="term" value="F:Atg8-family ligase activity"/>
    <property type="evidence" value="ECO:0007669"/>
    <property type="project" value="TreeGrafter"/>
</dbReference>
<dbReference type="GO" id="GO:0000422">
    <property type="term" value="P:autophagy of mitochondrion"/>
    <property type="evidence" value="ECO:0007669"/>
    <property type="project" value="TreeGrafter"/>
</dbReference>
<dbReference type="GO" id="GO:0006995">
    <property type="term" value="P:cellular response to nitrogen starvation"/>
    <property type="evidence" value="ECO:0007669"/>
    <property type="project" value="TreeGrafter"/>
</dbReference>
<dbReference type="GO" id="GO:0034727">
    <property type="term" value="P:piecemeal microautophagy of the nucleus"/>
    <property type="evidence" value="ECO:0007669"/>
    <property type="project" value="TreeGrafter"/>
</dbReference>
<dbReference type="GO" id="GO:0015031">
    <property type="term" value="P:protein transport"/>
    <property type="evidence" value="ECO:0007669"/>
    <property type="project" value="UniProtKB-KW"/>
</dbReference>
<dbReference type="Gene3D" id="3.10.20.620">
    <property type="match status" value="1"/>
</dbReference>
<dbReference type="Gene3D" id="1.10.246.190">
    <property type="entry name" value="Autophagy protein Apg5, helix rich domain"/>
    <property type="match status" value="1"/>
</dbReference>
<dbReference type="Gene3D" id="3.10.20.90">
    <property type="entry name" value="Phosphatidylinositol 3-kinase Catalytic Subunit, Chain A, domain 1"/>
    <property type="match status" value="1"/>
</dbReference>
<dbReference type="InterPro" id="IPR007239">
    <property type="entry name" value="Atg5"/>
</dbReference>
<dbReference type="InterPro" id="IPR048940">
    <property type="entry name" value="ATG5_HBR"/>
</dbReference>
<dbReference type="InterPro" id="IPR042526">
    <property type="entry name" value="Atg5_HR"/>
</dbReference>
<dbReference type="InterPro" id="IPR048939">
    <property type="entry name" value="ATG5_UblA"/>
</dbReference>
<dbReference type="InterPro" id="IPR042527">
    <property type="entry name" value="Atg5_UblA_dom_sf"/>
</dbReference>
<dbReference type="InterPro" id="IPR048318">
    <property type="entry name" value="ATG5_UblB"/>
</dbReference>
<dbReference type="PANTHER" id="PTHR13040">
    <property type="entry name" value="AUTOPHAGY PROTEIN 5"/>
    <property type="match status" value="1"/>
</dbReference>
<dbReference type="PANTHER" id="PTHR13040:SF2">
    <property type="entry name" value="AUTOPHAGY PROTEIN 5"/>
    <property type="match status" value="1"/>
</dbReference>
<dbReference type="Pfam" id="PF20637">
    <property type="entry name" value="ATG5_HBR"/>
    <property type="match status" value="1"/>
</dbReference>
<dbReference type="Pfam" id="PF20638">
    <property type="entry name" value="ATG5_UblA"/>
    <property type="match status" value="1"/>
</dbReference>
<dbReference type="Pfam" id="PF04106">
    <property type="entry name" value="ATG5_UblB"/>
    <property type="match status" value="1"/>
</dbReference>
<feature type="chain" id="PRO_0000317853" description="Autophagy protein 5">
    <location>
        <begin position="1"/>
        <end position="278"/>
    </location>
</feature>
<feature type="region of interest" description="Disordered" evidence="2">
    <location>
        <begin position="1"/>
        <end position="25"/>
    </location>
</feature>
<feature type="cross-link" description="Glycyl lysine isopeptide (Lys-Gly) (interchain with G-Cter in ATG12)" evidence="1">
    <location>
        <position position="128"/>
    </location>
</feature>
<protein>
    <recommendedName>
        <fullName>Autophagy protein 5</fullName>
    </recommendedName>
</protein>
<name>ATG5_CHAGB</name>
<evidence type="ECO:0000250" key="1"/>
<evidence type="ECO:0000256" key="2">
    <source>
        <dbReference type="SAM" id="MobiDB-lite"/>
    </source>
</evidence>
<evidence type="ECO:0000305" key="3"/>
<proteinExistence type="inferred from homology"/>